<sequence length="74" mass="8797">MYVGRDMSELNMVSKKDWKNSELAYFHHAFQQIMPYLNEEGQSKYRELTQEIEARGGMKRNEADYSHGTRVSYD</sequence>
<feature type="chain" id="PRO_0000370255" description="Uncharacterized protein YfhS">
    <location>
        <begin position="1"/>
        <end position="74"/>
    </location>
</feature>
<proteinExistence type="evidence at transcript level"/>
<comment type="developmental stage">
    <text evidence="1">Expressed in mother cell during sporulation.</text>
</comment>
<comment type="induction">
    <text evidence="1">Expression is sigma E-dependent.</text>
</comment>
<protein>
    <recommendedName>
        <fullName>Uncharacterized protein YfhS</fullName>
    </recommendedName>
</protein>
<dbReference type="EMBL" id="AL009126">
    <property type="protein sequence ID" value="CAB12692.1"/>
    <property type="molecule type" value="Genomic_DNA"/>
</dbReference>
<dbReference type="PIR" id="C69802">
    <property type="entry name" value="C69802"/>
</dbReference>
<dbReference type="RefSeq" id="NP_388744.1">
    <property type="nucleotide sequence ID" value="NC_000964.3"/>
</dbReference>
<dbReference type="RefSeq" id="WP_003233542.1">
    <property type="nucleotide sequence ID" value="NZ_OZ025638.1"/>
</dbReference>
<dbReference type="FunCoup" id="O31585">
    <property type="interactions" value="7"/>
</dbReference>
<dbReference type="STRING" id="224308.BSU08640"/>
<dbReference type="PaxDb" id="224308-BSU08640"/>
<dbReference type="EnsemblBacteria" id="CAB12692">
    <property type="protein sequence ID" value="CAB12692"/>
    <property type="gene ID" value="BSU_08640"/>
</dbReference>
<dbReference type="GeneID" id="936193"/>
<dbReference type="KEGG" id="bsu:BSU08640"/>
<dbReference type="PATRIC" id="fig|224308.179.peg.932"/>
<dbReference type="eggNOG" id="ENOG50335P2">
    <property type="taxonomic scope" value="Bacteria"/>
</dbReference>
<dbReference type="InParanoid" id="O31585"/>
<dbReference type="OrthoDB" id="2691543at2"/>
<dbReference type="BioCyc" id="BSUB:BSU08640-MONOMER"/>
<dbReference type="Proteomes" id="UP000001570">
    <property type="component" value="Chromosome"/>
</dbReference>
<accession>O31585</accession>
<reference key="1">
    <citation type="journal article" date="1997" name="Nature">
        <title>The complete genome sequence of the Gram-positive bacterium Bacillus subtilis.</title>
        <authorList>
            <person name="Kunst F."/>
            <person name="Ogasawara N."/>
            <person name="Moszer I."/>
            <person name="Albertini A.M."/>
            <person name="Alloni G."/>
            <person name="Azevedo V."/>
            <person name="Bertero M.G."/>
            <person name="Bessieres P."/>
            <person name="Bolotin A."/>
            <person name="Borchert S."/>
            <person name="Borriss R."/>
            <person name="Boursier L."/>
            <person name="Brans A."/>
            <person name="Braun M."/>
            <person name="Brignell S.C."/>
            <person name="Bron S."/>
            <person name="Brouillet S."/>
            <person name="Bruschi C.V."/>
            <person name="Caldwell B."/>
            <person name="Capuano V."/>
            <person name="Carter N.M."/>
            <person name="Choi S.-K."/>
            <person name="Codani J.-J."/>
            <person name="Connerton I.F."/>
            <person name="Cummings N.J."/>
            <person name="Daniel R.A."/>
            <person name="Denizot F."/>
            <person name="Devine K.M."/>
            <person name="Duesterhoeft A."/>
            <person name="Ehrlich S.D."/>
            <person name="Emmerson P.T."/>
            <person name="Entian K.-D."/>
            <person name="Errington J."/>
            <person name="Fabret C."/>
            <person name="Ferrari E."/>
            <person name="Foulger D."/>
            <person name="Fritz C."/>
            <person name="Fujita M."/>
            <person name="Fujita Y."/>
            <person name="Fuma S."/>
            <person name="Galizzi A."/>
            <person name="Galleron N."/>
            <person name="Ghim S.-Y."/>
            <person name="Glaser P."/>
            <person name="Goffeau A."/>
            <person name="Golightly E.J."/>
            <person name="Grandi G."/>
            <person name="Guiseppi G."/>
            <person name="Guy B.J."/>
            <person name="Haga K."/>
            <person name="Haiech J."/>
            <person name="Harwood C.R."/>
            <person name="Henaut A."/>
            <person name="Hilbert H."/>
            <person name="Holsappel S."/>
            <person name="Hosono S."/>
            <person name="Hullo M.-F."/>
            <person name="Itaya M."/>
            <person name="Jones L.-M."/>
            <person name="Joris B."/>
            <person name="Karamata D."/>
            <person name="Kasahara Y."/>
            <person name="Klaerr-Blanchard M."/>
            <person name="Klein C."/>
            <person name="Kobayashi Y."/>
            <person name="Koetter P."/>
            <person name="Koningstein G."/>
            <person name="Krogh S."/>
            <person name="Kumano M."/>
            <person name="Kurita K."/>
            <person name="Lapidus A."/>
            <person name="Lardinois S."/>
            <person name="Lauber J."/>
            <person name="Lazarevic V."/>
            <person name="Lee S.-M."/>
            <person name="Levine A."/>
            <person name="Liu H."/>
            <person name="Masuda S."/>
            <person name="Mauel C."/>
            <person name="Medigue C."/>
            <person name="Medina N."/>
            <person name="Mellado R.P."/>
            <person name="Mizuno M."/>
            <person name="Moestl D."/>
            <person name="Nakai S."/>
            <person name="Noback M."/>
            <person name="Noone D."/>
            <person name="O'Reilly M."/>
            <person name="Ogawa K."/>
            <person name="Ogiwara A."/>
            <person name="Oudega B."/>
            <person name="Park S.-H."/>
            <person name="Parro V."/>
            <person name="Pohl T.M."/>
            <person name="Portetelle D."/>
            <person name="Porwollik S."/>
            <person name="Prescott A.M."/>
            <person name="Presecan E."/>
            <person name="Pujic P."/>
            <person name="Purnelle B."/>
            <person name="Rapoport G."/>
            <person name="Rey M."/>
            <person name="Reynolds S."/>
            <person name="Rieger M."/>
            <person name="Rivolta C."/>
            <person name="Rocha E."/>
            <person name="Roche B."/>
            <person name="Rose M."/>
            <person name="Sadaie Y."/>
            <person name="Sato T."/>
            <person name="Scanlan E."/>
            <person name="Schleich S."/>
            <person name="Schroeter R."/>
            <person name="Scoffone F."/>
            <person name="Sekiguchi J."/>
            <person name="Sekowska A."/>
            <person name="Seror S.J."/>
            <person name="Serror P."/>
            <person name="Shin B.-S."/>
            <person name="Soldo B."/>
            <person name="Sorokin A."/>
            <person name="Tacconi E."/>
            <person name="Takagi T."/>
            <person name="Takahashi H."/>
            <person name="Takemaru K."/>
            <person name="Takeuchi M."/>
            <person name="Tamakoshi A."/>
            <person name="Tanaka T."/>
            <person name="Terpstra P."/>
            <person name="Tognoni A."/>
            <person name="Tosato V."/>
            <person name="Uchiyama S."/>
            <person name="Vandenbol M."/>
            <person name="Vannier F."/>
            <person name="Vassarotti A."/>
            <person name="Viari A."/>
            <person name="Wambutt R."/>
            <person name="Wedler E."/>
            <person name="Wedler H."/>
            <person name="Weitzenegger T."/>
            <person name="Winters P."/>
            <person name="Wipat A."/>
            <person name="Yamamoto H."/>
            <person name="Yamane K."/>
            <person name="Yasumoto K."/>
            <person name="Yata K."/>
            <person name="Yoshida K."/>
            <person name="Yoshikawa H.-F."/>
            <person name="Zumstein E."/>
            <person name="Yoshikawa H."/>
            <person name="Danchin A."/>
        </authorList>
    </citation>
    <scope>NUCLEOTIDE SEQUENCE [LARGE SCALE GENOMIC DNA]</scope>
    <source>
        <strain>168</strain>
    </source>
</reference>
<reference key="2">
    <citation type="journal article" date="1999" name="Microbiology">
        <title>Transcription of genes near the sspE locus of the Bacillus subtilis genome.</title>
        <authorList>
            <person name="Yamamoto H."/>
            <person name="Mori M."/>
            <person name="Sekiguchi J."/>
        </authorList>
    </citation>
    <scope>DEVELOPMENTAL STAGE</scope>
    <scope>INDUCTION</scope>
    <source>
        <strain>168</strain>
    </source>
</reference>
<keyword id="KW-1185">Reference proteome</keyword>
<evidence type="ECO:0000269" key="1">
    <source>
    </source>
</evidence>
<gene>
    <name type="primary">yfhS</name>
    <name type="ordered locus">BSU08640</name>
</gene>
<organism>
    <name type="scientific">Bacillus subtilis (strain 168)</name>
    <dbReference type="NCBI Taxonomy" id="224308"/>
    <lineage>
        <taxon>Bacteria</taxon>
        <taxon>Bacillati</taxon>
        <taxon>Bacillota</taxon>
        <taxon>Bacilli</taxon>
        <taxon>Bacillales</taxon>
        <taxon>Bacillaceae</taxon>
        <taxon>Bacillus</taxon>
    </lineage>
</organism>
<name>YFHS_BACSU</name>